<geneLocation type="chloroplast"/>
<feature type="chain" id="PRO_0000048049" description="DNA-directed RNA polymerase subunit beta">
    <location>
        <begin position="1"/>
        <end position="1070"/>
    </location>
</feature>
<feature type="sequence conflict" description="In Ref. 1; AAL07334." evidence="2" ref="1">
    <original>G</original>
    <variation>R</variation>
    <location>
        <position position="3"/>
    </location>
</feature>
<feature type="sequence conflict" description="In Ref. 1; AAL07334." evidence="2" ref="1">
    <original>L</original>
    <variation>I</variation>
    <location>
        <position position="12"/>
    </location>
</feature>
<feature type="sequence conflict" description="In Ref. 1; AAL07334." evidence="2" ref="1">
    <original>L</original>
    <variation>F</variation>
    <location>
        <position position="15"/>
    </location>
</feature>
<feature type="sequence conflict" description="In Ref. 1; AAL07334." evidence="2" ref="1">
    <original>C</original>
    <variation>W</variation>
    <location>
        <position position="24"/>
    </location>
</feature>
<feature type="sequence conflict" description="In Ref. 1; AAL07334." evidence="2" ref="1">
    <original>R</original>
    <variation>Q</variation>
    <location>
        <position position="29"/>
    </location>
</feature>
<feature type="sequence conflict" description="In Ref. 1; AAL07334." evidence="2" ref="1">
    <original>PEGLF</original>
    <variation>TEELS</variation>
    <location>
        <begin position="32"/>
        <end position="36"/>
    </location>
</feature>
<feature type="sequence conflict" description="In Ref. 1; AAL07334." evidence="2" ref="1">
    <original>I</original>
    <variation>M</variation>
    <location>
        <position position="41"/>
    </location>
</feature>
<feature type="sequence conflict" description="In Ref. 1; AAL07334." evidence="2" ref="1">
    <original>L</original>
    <variation>A</variation>
    <location>
        <position position="60"/>
    </location>
</feature>
<feature type="sequence conflict" description="In Ref. 1; AAL07334." evidence="2" ref="1">
    <original>N</original>
    <variation>K</variation>
    <location>
        <position position="65"/>
    </location>
</feature>
<feature type="sequence conflict" description="In Ref. 1; AAL07334." evidence="2" ref="1">
    <original>A</original>
    <variation>S</variation>
    <location>
        <position position="78"/>
    </location>
</feature>
<feature type="sequence conflict" description="In Ref. 1; AAL07334." evidence="2" ref="1">
    <original>SSRDI</original>
    <variation>TRREM</variation>
    <location>
        <begin position="90"/>
        <end position="94"/>
    </location>
</feature>
<feature type="sequence conflict" description="In Ref. 1; AAL07334." evidence="2" ref="1">
    <original>FV</original>
    <variation>LI</variation>
    <location>
        <begin position="100"/>
        <end position="101"/>
    </location>
</feature>
<feature type="sequence conflict" description="In Ref. 1; AAL07334." evidence="2" ref="1">
    <original>PGG</original>
    <variation>LED</variation>
    <location>
        <begin position="398"/>
        <end position="400"/>
    </location>
</feature>
<feature type="sequence conflict" description="In Ref. 1; AAL07334." evidence="2" ref="1">
    <original>R</original>
    <variation>A</variation>
    <location>
        <position position="404"/>
    </location>
</feature>
<feature type="sequence conflict" description="In Ref. 1; AAL07334." evidence="2" ref="1">
    <original>A</original>
    <variation>T</variation>
    <location>
        <position position="539"/>
    </location>
</feature>
<feature type="sequence conflict" description="In Ref. 1; AAL07334." evidence="2" ref="1">
    <original>D</original>
    <variation>V</variation>
    <location>
        <position position="574"/>
    </location>
</feature>
<dbReference type="EC" id="2.7.7.6" evidence="1"/>
<dbReference type="EMBL" id="AF289093">
    <property type="protein sequence ID" value="AAL07334.1"/>
    <property type="molecule type" value="Genomic_DNA"/>
</dbReference>
<dbReference type="EMBL" id="DQ317523">
    <property type="protein sequence ID" value="ABC25123.1"/>
    <property type="molecule type" value="Genomic_DNA"/>
</dbReference>
<dbReference type="RefSeq" id="YP_538763.1">
    <property type="nucleotide sequence ID" value="NC_007942.1"/>
</dbReference>
<dbReference type="SMR" id="Q8HVY5"/>
<dbReference type="FunCoup" id="Q8HVY5">
    <property type="interactions" value="398"/>
</dbReference>
<dbReference type="STRING" id="3847.Q8HVY5"/>
<dbReference type="PaxDb" id="3847-GLYMA12G29365.1"/>
<dbReference type="GeneID" id="3989291"/>
<dbReference type="KEGG" id="gmx:3989291"/>
<dbReference type="eggNOG" id="KOG0214">
    <property type="taxonomic scope" value="Eukaryota"/>
</dbReference>
<dbReference type="InParanoid" id="Q8HVY5"/>
<dbReference type="Proteomes" id="UP000008827">
    <property type="component" value="Chloroplast"/>
</dbReference>
<dbReference type="GO" id="GO:0009507">
    <property type="term" value="C:chloroplast"/>
    <property type="evidence" value="ECO:0007669"/>
    <property type="project" value="UniProtKB-SubCell"/>
</dbReference>
<dbReference type="GO" id="GO:0000428">
    <property type="term" value="C:DNA-directed RNA polymerase complex"/>
    <property type="evidence" value="ECO:0007669"/>
    <property type="project" value="UniProtKB-KW"/>
</dbReference>
<dbReference type="GO" id="GO:0005739">
    <property type="term" value="C:mitochondrion"/>
    <property type="evidence" value="ECO:0007669"/>
    <property type="project" value="GOC"/>
</dbReference>
<dbReference type="GO" id="GO:0003677">
    <property type="term" value="F:DNA binding"/>
    <property type="evidence" value="ECO:0007669"/>
    <property type="project" value="UniProtKB-UniRule"/>
</dbReference>
<dbReference type="GO" id="GO:0003899">
    <property type="term" value="F:DNA-directed RNA polymerase activity"/>
    <property type="evidence" value="ECO:0007669"/>
    <property type="project" value="UniProtKB-UniRule"/>
</dbReference>
<dbReference type="GO" id="GO:0032549">
    <property type="term" value="F:ribonucleoside binding"/>
    <property type="evidence" value="ECO:0007669"/>
    <property type="project" value="InterPro"/>
</dbReference>
<dbReference type="GO" id="GO:0006351">
    <property type="term" value="P:DNA-templated transcription"/>
    <property type="evidence" value="ECO:0007669"/>
    <property type="project" value="UniProtKB-UniRule"/>
</dbReference>
<dbReference type="CDD" id="cd00653">
    <property type="entry name" value="RNA_pol_B_RPB2"/>
    <property type="match status" value="1"/>
</dbReference>
<dbReference type="FunFam" id="3.90.1110.10:FF:000009">
    <property type="entry name" value="DNA-directed RNA polymerase subunit beta"/>
    <property type="match status" value="1"/>
</dbReference>
<dbReference type="Gene3D" id="2.40.50.100">
    <property type="match status" value="1"/>
</dbReference>
<dbReference type="Gene3D" id="2.40.50.150">
    <property type="match status" value="1"/>
</dbReference>
<dbReference type="Gene3D" id="3.90.1100.10">
    <property type="match status" value="1"/>
</dbReference>
<dbReference type="Gene3D" id="2.30.150.10">
    <property type="entry name" value="DNA-directed RNA polymerase, beta subunit, external 1 domain"/>
    <property type="match status" value="1"/>
</dbReference>
<dbReference type="Gene3D" id="2.40.270.10">
    <property type="entry name" value="DNA-directed RNA polymerase, subunit 2, domain 6"/>
    <property type="match status" value="1"/>
</dbReference>
<dbReference type="Gene3D" id="3.90.1800.10">
    <property type="entry name" value="RNA polymerase alpha subunit dimerisation domain"/>
    <property type="match status" value="1"/>
</dbReference>
<dbReference type="Gene3D" id="3.90.1110.10">
    <property type="entry name" value="RNA polymerase Rpb2, domain 2"/>
    <property type="match status" value="1"/>
</dbReference>
<dbReference type="HAMAP" id="MF_01321">
    <property type="entry name" value="RNApol_bact_RpoB"/>
    <property type="match status" value="1"/>
</dbReference>
<dbReference type="InterPro" id="IPR042107">
    <property type="entry name" value="DNA-dir_RNA_pol_bsu_ext_1_sf"/>
</dbReference>
<dbReference type="InterPro" id="IPR015712">
    <property type="entry name" value="DNA-dir_RNA_pol_su2"/>
</dbReference>
<dbReference type="InterPro" id="IPR007120">
    <property type="entry name" value="DNA-dir_RNAP_su2_dom"/>
</dbReference>
<dbReference type="InterPro" id="IPR037033">
    <property type="entry name" value="DNA-dir_RNAP_su2_hyb_sf"/>
</dbReference>
<dbReference type="InterPro" id="IPR010243">
    <property type="entry name" value="RNA_pol_bsu_bac"/>
</dbReference>
<dbReference type="InterPro" id="IPR007121">
    <property type="entry name" value="RNA_pol_bsu_CS"/>
</dbReference>
<dbReference type="InterPro" id="IPR007642">
    <property type="entry name" value="RNA_pol_Rpb2_2"/>
</dbReference>
<dbReference type="InterPro" id="IPR037034">
    <property type="entry name" value="RNA_pol_Rpb2_2_sf"/>
</dbReference>
<dbReference type="InterPro" id="IPR007645">
    <property type="entry name" value="RNA_pol_Rpb2_3"/>
</dbReference>
<dbReference type="InterPro" id="IPR007641">
    <property type="entry name" value="RNA_pol_Rpb2_7"/>
</dbReference>
<dbReference type="InterPro" id="IPR014724">
    <property type="entry name" value="RNA_pol_RPB2_OB-fold"/>
</dbReference>
<dbReference type="NCBIfam" id="NF001616">
    <property type="entry name" value="PRK00405.1"/>
    <property type="match status" value="1"/>
</dbReference>
<dbReference type="PANTHER" id="PTHR20856">
    <property type="entry name" value="DNA-DIRECTED RNA POLYMERASE I SUBUNIT 2"/>
    <property type="match status" value="1"/>
</dbReference>
<dbReference type="Pfam" id="PF04561">
    <property type="entry name" value="RNA_pol_Rpb2_2"/>
    <property type="match status" value="1"/>
</dbReference>
<dbReference type="Pfam" id="PF04565">
    <property type="entry name" value="RNA_pol_Rpb2_3"/>
    <property type="match status" value="1"/>
</dbReference>
<dbReference type="Pfam" id="PF00562">
    <property type="entry name" value="RNA_pol_Rpb2_6"/>
    <property type="match status" value="1"/>
</dbReference>
<dbReference type="Pfam" id="PF04560">
    <property type="entry name" value="RNA_pol_Rpb2_7"/>
    <property type="match status" value="1"/>
</dbReference>
<dbReference type="SUPFAM" id="SSF64484">
    <property type="entry name" value="beta and beta-prime subunits of DNA dependent RNA-polymerase"/>
    <property type="match status" value="1"/>
</dbReference>
<dbReference type="PROSITE" id="PS01166">
    <property type="entry name" value="RNA_POL_BETA"/>
    <property type="match status" value="1"/>
</dbReference>
<accession>Q8HVY5</accession>
<accession>Q2PMT5</accession>
<organism>
    <name type="scientific">Glycine max</name>
    <name type="common">Soybean</name>
    <name type="synonym">Glycine hispida</name>
    <dbReference type="NCBI Taxonomy" id="3847"/>
    <lineage>
        <taxon>Eukaryota</taxon>
        <taxon>Viridiplantae</taxon>
        <taxon>Streptophyta</taxon>
        <taxon>Embryophyta</taxon>
        <taxon>Tracheophyta</taxon>
        <taxon>Spermatophyta</taxon>
        <taxon>Magnoliopsida</taxon>
        <taxon>eudicotyledons</taxon>
        <taxon>Gunneridae</taxon>
        <taxon>Pentapetalae</taxon>
        <taxon>rosids</taxon>
        <taxon>fabids</taxon>
        <taxon>Fabales</taxon>
        <taxon>Fabaceae</taxon>
        <taxon>Papilionoideae</taxon>
        <taxon>50 kb inversion clade</taxon>
        <taxon>NPAAA clade</taxon>
        <taxon>indigoferoid/millettioid clade</taxon>
        <taxon>Phaseoleae</taxon>
        <taxon>Glycine</taxon>
        <taxon>Glycine subgen. Soja</taxon>
    </lineage>
</organism>
<evidence type="ECO:0000255" key="1">
    <source>
        <dbReference type="HAMAP-Rule" id="MF_01321"/>
    </source>
</evidence>
<evidence type="ECO:0000305" key="2"/>
<sequence>MLGDGNEGMSTLPGLNQIQFEGFCRFIDRGLPEGLFKFPKIEDTDQEIEFQLFVETYQLLEPLINEKDAVYESLTYSAELYVSAGLIWKSSRDIQEQTIFVGNIPLMNSLGTSIVNGIYRIVINQILQSPGIYYRSELDPSGISVYTGTIISDWGGRLELEIDRKARIWARVSRKQKISILVLSSAMGSNLSEILENVCYPEIFVSFLNDKDKKKIGSKENAILEFYRQFACVGGDPVFSESLCKELQKKFFQQRCELGRIGRRNMNQKLNLDIPQNNTFLLPRDILTAADHLIGMKFGMGILDDINHLKNKRIRSVADLLQDQFGLALVRLENMVRGTICGAIRHKLIPTPQNLVTSTPLTTTYESFFGLHPLSQVLDQTNPLTQIVHGRKLSYLGPGGLTGRTASFRIRDIHPSHYGRICPIDTSEGINVGLIGSLAIHARIGSWGSIESPFYEISERSKRIRMLYLSPSRDEYYMVATGNSLALNRDIQEEQTVPARYRQEFLTIAWEQVHLRSIFPFQYFSIGASLIPFIEHNDANRALMSSNMQRQAVPLSQSEKCIVGTGLERQVALDSGVSAIAEHEGNIIYTNTDRIFLFGNGDTLSIPLTIYQRSNKNTCMHQKPQVRRGKCIKKGQILADGAATVDGELALGKNVLVAYMPWEGYNSEDAVLINERLVYEDIYTSFHIRKYEIQTHMTSYGSERITNKIPHLEAHLLRNLDKNGIVILGSWVETGDILVGKLTPQMAKESSYSPEDRLLRAILGIQVSTSKETCLKLPTGGRGRVIDVRWIQKKGGSSYNPETIRIYILQKREIKVGDKVAGRHGNKGIVSKILSRQDMPYLQDGRPVDMVFNPLGVPSRMNVGQIFECSLGLAGGMLERHYRITPFDERYEQEASRKLVFSELYEASKQTSNPWIFEPEYPGKSKIFDGRTGNSFKQPAIMGKPYILKLIHQVDDKIHGRSSGHYALVTQQPLRGRAKQGGQRVGEMEVWALEGFGVAHILQEMLTYKSDHIKTRQEVLGTTIIGGTIPKPTDAPESFRLLVRELRSLAMELNHFLVSEKNFRIHRKEA</sequence>
<comment type="function">
    <text evidence="1">DNA-dependent RNA polymerase catalyzes the transcription of DNA into RNA using the four ribonucleoside triphosphates as substrates.</text>
</comment>
<comment type="catalytic activity">
    <reaction evidence="1">
        <text>RNA(n) + a ribonucleoside 5'-triphosphate = RNA(n+1) + diphosphate</text>
        <dbReference type="Rhea" id="RHEA:21248"/>
        <dbReference type="Rhea" id="RHEA-COMP:14527"/>
        <dbReference type="Rhea" id="RHEA-COMP:17342"/>
        <dbReference type="ChEBI" id="CHEBI:33019"/>
        <dbReference type="ChEBI" id="CHEBI:61557"/>
        <dbReference type="ChEBI" id="CHEBI:140395"/>
        <dbReference type="EC" id="2.7.7.6"/>
    </reaction>
</comment>
<comment type="subunit">
    <text evidence="1">In plastids the minimal PEP RNA polymerase catalytic core is composed of four subunits: alpha, beta, beta', and beta''. When a (nuclear-encoded) sigma factor is associated with the core the holoenzyme is formed, which can initiate transcription.</text>
</comment>
<comment type="subcellular location">
    <subcellularLocation>
        <location>Plastid</location>
        <location>Chloroplast</location>
    </subcellularLocation>
</comment>
<comment type="similarity">
    <text evidence="1">Belongs to the RNA polymerase beta chain family.</text>
</comment>
<keyword id="KW-0150">Chloroplast</keyword>
<keyword id="KW-0240">DNA-directed RNA polymerase</keyword>
<keyword id="KW-0548">Nucleotidyltransferase</keyword>
<keyword id="KW-0934">Plastid</keyword>
<keyword id="KW-1185">Reference proteome</keyword>
<keyword id="KW-0804">Transcription</keyword>
<keyword id="KW-0808">Transferase</keyword>
<name>RPOB_SOYBN</name>
<gene>
    <name evidence="1" type="primary">rpoB</name>
</gene>
<proteinExistence type="inferred from homology"/>
<reference key="1">
    <citation type="submission" date="2000-07" db="EMBL/GenBank/DDBJ databases">
        <title>Sequence of rpoBC gene cluster.</title>
        <authorList>
            <person name="Min-Gu L."/>
            <person name="Hoon-Seok Y."/>
            <person name="Jeong-Kook K."/>
        </authorList>
    </citation>
    <scope>NUCLEOTIDE SEQUENCE [GENOMIC DNA]</scope>
</reference>
<reference key="2">
    <citation type="journal article" date="2005" name="Plant Mol. Biol.">
        <title>Complete chloroplast genome sequence of Glycine max and comparative analyses with other legume genomes.</title>
        <authorList>
            <person name="Saski C."/>
            <person name="Lee S.-B."/>
            <person name="Daniell H."/>
            <person name="Wood T.C."/>
            <person name="Tomkins J."/>
            <person name="Kim H.-G."/>
            <person name="Jansen R.K."/>
        </authorList>
    </citation>
    <scope>NUCLEOTIDE SEQUENCE [LARGE SCALE GENOMIC DNA]</scope>
    <source>
        <strain>cv. PI 437654</strain>
    </source>
</reference>
<protein>
    <recommendedName>
        <fullName evidence="1">DNA-directed RNA polymerase subunit beta</fullName>
        <ecNumber evidence="1">2.7.7.6</ecNumber>
    </recommendedName>
    <alternativeName>
        <fullName evidence="1">PEP</fullName>
    </alternativeName>
    <alternativeName>
        <fullName evidence="1">Plastid-encoded RNA polymerase subunit beta</fullName>
        <shortName evidence="1">RNA polymerase subunit beta</shortName>
    </alternativeName>
</protein>